<gene>
    <name evidence="1" type="primary">fmt</name>
    <name type="ordered locus">Rleg2_0058</name>
</gene>
<reference key="1">
    <citation type="journal article" date="2010" name="Stand. Genomic Sci.">
        <title>Complete genome sequence of Rhizobium leguminosarum bv trifolii strain WSM2304, an effective microsymbiont of the South American clover Trifolium polymorphum.</title>
        <authorList>
            <person name="Reeve W."/>
            <person name="O'Hara G."/>
            <person name="Chain P."/>
            <person name="Ardley J."/>
            <person name="Brau L."/>
            <person name="Nandesena K."/>
            <person name="Tiwari R."/>
            <person name="Malfatti S."/>
            <person name="Kiss H."/>
            <person name="Lapidus A."/>
            <person name="Copeland A."/>
            <person name="Nolan M."/>
            <person name="Land M."/>
            <person name="Ivanova N."/>
            <person name="Mavromatis K."/>
            <person name="Markowitz V."/>
            <person name="Kyrpides N."/>
            <person name="Melino V."/>
            <person name="Denton M."/>
            <person name="Yates R."/>
            <person name="Howieson J."/>
        </authorList>
    </citation>
    <scope>NUCLEOTIDE SEQUENCE [LARGE SCALE GENOMIC DNA]</scope>
    <source>
        <strain>WSM2304</strain>
    </source>
</reference>
<proteinExistence type="inferred from homology"/>
<comment type="function">
    <text evidence="1">Attaches a formyl group to the free amino group of methionyl-tRNA(fMet). The formyl group appears to play a dual role in the initiator identity of N-formylmethionyl-tRNA by promoting its recognition by IF2 and preventing the misappropriation of this tRNA by the elongation apparatus.</text>
</comment>
<comment type="catalytic activity">
    <reaction evidence="1">
        <text>L-methionyl-tRNA(fMet) + (6R)-10-formyltetrahydrofolate = N-formyl-L-methionyl-tRNA(fMet) + (6S)-5,6,7,8-tetrahydrofolate + H(+)</text>
        <dbReference type="Rhea" id="RHEA:24380"/>
        <dbReference type="Rhea" id="RHEA-COMP:9952"/>
        <dbReference type="Rhea" id="RHEA-COMP:9953"/>
        <dbReference type="ChEBI" id="CHEBI:15378"/>
        <dbReference type="ChEBI" id="CHEBI:57453"/>
        <dbReference type="ChEBI" id="CHEBI:78530"/>
        <dbReference type="ChEBI" id="CHEBI:78844"/>
        <dbReference type="ChEBI" id="CHEBI:195366"/>
        <dbReference type="EC" id="2.1.2.9"/>
    </reaction>
</comment>
<comment type="similarity">
    <text evidence="1">Belongs to the Fmt family.</text>
</comment>
<sequence>MSLSIIFMGTPEFSVPTLRLLVDAGHRIVAVYTQPPRPGGRRGLDLQKSPVHQAAELLGLPVFTPVNFKDPEERERFAALKADVAVVVAYGLLLPEAVLNGTRDGCYNGHASLLPRWRGAAPIQRAIMAGDAETGMMVMKMDKGLDTGAVALTRKVEIGPNMTAGELHDRLMQVGAKAMAEAMVKLEMNDLPLTPQPQDGVLYAAKIDKAETRIDFARPALDVHNHIRGLAPFPGAWFELEIGGKPERVKVLGSELAEGQGAAGELLTDDLVVACASGAVRLTRLQKAGGKPLAAADFLRGTPLAAGMRLS</sequence>
<feature type="chain" id="PRO_1000098433" description="Methionyl-tRNA formyltransferase">
    <location>
        <begin position="1"/>
        <end position="311"/>
    </location>
</feature>
<feature type="binding site" evidence="1">
    <location>
        <begin position="112"/>
        <end position="115"/>
    </location>
    <ligand>
        <name>(6S)-5,6,7,8-tetrahydrofolate</name>
        <dbReference type="ChEBI" id="CHEBI:57453"/>
    </ligand>
</feature>
<protein>
    <recommendedName>
        <fullName evidence="1">Methionyl-tRNA formyltransferase</fullName>
        <ecNumber evidence="1">2.1.2.9</ecNumber>
    </recommendedName>
</protein>
<name>FMT_RHILW</name>
<dbReference type="EC" id="2.1.2.9" evidence="1"/>
<dbReference type="EMBL" id="CP001191">
    <property type="protein sequence ID" value="ACI53361.1"/>
    <property type="molecule type" value="Genomic_DNA"/>
</dbReference>
<dbReference type="RefSeq" id="WP_012556405.1">
    <property type="nucleotide sequence ID" value="NC_011369.1"/>
</dbReference>
<dbReference type="SMR" id="B5ZN20"/>
<dbReference type="STRING" id="395492.Rleg2_0058"/>
<dbReference type="KEGG" id="rlt:Rleg2_0058"/>
<dbReference type="eggNOG" id="COG0223">
    <property type="taxonomic scope" value="Bacteria"/>
</dbReference>
<dbReference type="HOGENOM" id="CLU_033347_1_2_5"/>
<dbReference type="Proteomes" id="UP000008330">
    <property type="component" value="Chromosome"/>
</dbReference>
<dbReference type="GO" id="GO:0005829">
    <property type="term" value="C:cytosol"/>
    <property type="evidence" value="ECO:0007669"/>
    <property type="project" value="TreeGrafter"/>
</dbReference>
<dbReference type="GO" id="GO:0004479">
    <property type="term" value="F:methionyl-tRNA formyltransferase activity"/>
    <property type="evidence" value="ECO:0007669"/>
    <property type="project" value="UniProtKB-UniRule"/>
</dbReference>
<dbReference type="CDD" id="cd08646">
    <property type="entry name" value="FMT_core_Met-tRNA-FMT_N"/>
    <property type="match status" value="1"/>
</dbReference>
<dbReference type="CDD" id="cd08704">
    <property type="entry name" value="Met_tRNA_FMT_C"/>
    <property type="match status" value="1"/>
</dbReference>
<dbReference type="Gene3D" id="3.40.50.12230">
    <property type="match status" value="1"/>
</dbReference>
<dbReference type="HAMAP" id="MF_00182">
    <property type="entry name" value="Formyl_trans"/>
    <property type="match status" value="1"/>
</dbReference>
<dbReference type="InterPro" id="IPR005794">
    <property type="entry name" value="Fmt"/>
</dbReference>
<dbReference type="InterPro" id="IPR005793">
    <property type="entry name" value="Formyl_trans_C"/>
</dbReference>
<dbReference type="InterPro" id="IPR002376">
    <property type="entry name" value="Formyl_transf_N"/>
</dbReference>
<dbReference type="InterPro" id="IPR036477">
    <property type="entry name" value="Formyl_transf_N_sf"/>
</dbReference>
<dbReference type="InterPro" id="IPR011034">
    <property type="entry name" value="Formyl_transferase-like_C_sf"/>
</dbReference>
<dbReference type="InterPro" id="IPR001555">
    <property type="entry name" value="GART_AS"/>
</dbReference>
<dbReference type="InterPro" id="IPR044135">
    <property type="entry name" value="Met-tRNA-FMT_C"/>
</dbReference>
<dbReference type="InterPro" id="IPR041711">
    <property type="entry name" value="Met-tRNA-FMT_N"/>
</dbReference>
<dbReference type="NCBIfam" id="TIGR00460">
    <property type="entry name" value="fmt"/>
    <property type="match status" value="1"/>
</dbReference>
<dbReference type="PANTHER" id="PTHR11138">
    <property type="entry name" value="METHIONYL-TRNA FORMYLTRANSFERASE"/>
    <property type="match status" value="1"/>
</dbReference>
<dbReference type="PANTHER" id="PTHR11138:SF5">
    <property type="entry name" value="METHIONYL-TRNA FORMYLTRANSFERASE, MITOCHONDRIAL"/>
    <property type="match status" value="1"/>
</dbReference>
<dbReference type="Pfam" id="PF02911">
    <property type="entry name" value="Formyl_trans_C"/>
    <property type="match status" value="1"/>
</dbReference>
<dbReference type="Pfam" id="PF00551">
    <property type="entry name" value="Formyl_trans_N"/>
    <property type="match status" value="1"/>
</dbReference>
<dbReference type="SUPFAM" id="SSF50486">
    <property type="entry name" value="FMT C-terminal domain-like"/>
    <property type="match status" value="1"/>
</dbReference>
<dbReference type="SUPFAM" id="SSF53328">
    <property type="entry name" value="Formyltransferase"/>
    <property type="match status" value="1"/>
</dbReference>
<dbReference type="PROSITE" id="PS00373">
    <property type="entry name" value="GART"/>
    <property type="match status" value="1"/>
</dbReference>
<organism>
    <name type="scientific">Rhizobium leguminosarum bv. trifolii (strain WSM2304)</name>
    <dbReference type="NCBI Taxonomy" id="395492"/>
    <lineage>
        <taxon>Bacteria</taxon>
        <taxon>Pseudomonadati</taxon>
        <taxon>Pseudomonadota</taxon>
        <taxon>Alphaproteobacteria</taxon>
        <taxon>Hyphomicrobiales</taxon>
        <taxon>Rhizobiaceae</taxon>
        <taxon>Rhizobium/Agrobacterium group</taxon>
        <taxon>Rhizobium</taxon>
    </lineage>
</organism>
<accession>B5ZN20</accession>
<keyword id="KW-0648">Protein biosynthesis</keyword>
<keyword id="KW-1185">Reference proteome</keyword>
<keyword id="KW-0808">Transferase</keyword>
<evidence type="ECO:0000255" key="1">
    <source>
        <dbReference type="HAMAP-Rule" id="MF_00182"/>
    </source>
</evidence>